<protein>
    <recommendedName>
        <fullName evidence="1">Holliday junction resolvase RecU</fullName>
        <ecNumber evidence="1">3.1.21.10</ecNumber>
    </recommendedName>
    <alternativeName>
        <fullName evidence="1">Recombination protein U homolog</fullName>
    </alternativeName>
</protein>
<organism>
    <name type="scientific">Streptococcus pneumoniae (strain Taiwan19F-14)</name>
    <dbReference type="NCBI Taxonomy" id="487213"/>
    <lineage>
        <taxon>Bacteria</taxon>
        <taxon>Bacillati</taxon>
        <taxon>Bacillota</taxon>
        <taxon>Bacilli</taxon>
        <taxon>Lactobacillales</taxon>
        <taxon>Streptococcaceae</taxon>
        <taxon>Streptococcus</taxon>
    </lineage>
</organism>
<dbReference type="EC" id="3.1.21.10" evidence="1"/>
<dbReference type="EMBL" id="CP000921">
    <property type="protein sequence ID" value="ACO23541.1"/>
    <property type="molecule type" value="Genomic_DNA"/>
</dbReference>
<dbReference type="RefSeq" id="WP_000248773.1">
    <property type="nucleotide sequence ID" value="NC_012469.1"/>
</dbReference>
<dbReference type="SMR" id="C1CPN7"/>
<dbReference type="KEGG" id="snt:SPT_0413"/>
<dbReference type="HOGENOM" id="CLU_096340_0_0_9"/>
<dbReference type="GO" id="GO:0005737">
    <property type="term" value="C:cytoplasm"/>
    <property type="evidence" value="ECO:0007669"/>
    <property type="project" value="UniProtKB-SubCell"/>
</dbReference>
<dbReference type="GO" id="GO:0004519">
    <property type="term" value="F:endonuclease activity"/>
    <property type="evidence" value="ECO:0007669"/>
    <property type="project" value="UniProtKB-UniRule"/>
</dbReference>
<dbReference type="GO" id="GO:0000287">
    <property type="term" value="F:magnesium ion binding"/>
    <property type="evidence" value="ECO:0007669"/>
    <property type="project" value="UniProtKB-UniRule"/>
</dbReference>
<dbReference type="GO" id="GO:0003676">
    <property type="term" value="F:nucleic acid binding"/>
    <property type="evidence" value="ECO:0007669"/>
    <property type="project" value="InterPro"/>
</dbReference>
<dbReference type="GO" id="GO:0007059">
    <property type="term" value="P:chromosome segregation"/>
    <property type="evidence" value="ECO:0007669"/>
    <property type="project" value="UniProtKB-UniRule"/>
</dbReference>
<dbReference type="GO" id="GO:0006310">
    <property type="term" value="P:DNA recombination"/>
    <property type="evidence" value="ECO:0007669"/>
    <property type="project" value="UniProtKB-UniRule"/>
</dbReference>
<dbReference type="GO" id="GO:0006281">
    <property type="term" value="P:DNA repair"/>
    <property type="evidence" value="ECO:0007669"/>
    <property type="project" value="UniProtKB-UniRule"/>
</dbReference>
<dbReference type="CDD" id="cd22354">
    <property type="entry name" value="RecU-like"/>
    <property type="match status" value="1"/>
</dbReference>
<dbReference type="Gene3D" id="3.40.1350.10">
    <property type="match status" value="1"/>
</dbReference>
<dbReference type="HAMAP" id="MF_00130">
    <property type="entry name" value="RecU"/>
    <property type="match status" value="1"/>
</dbReference>
<dbReference type="InterPro" id="IPR004612">
    <property type="entry name" value="Resolv_RecU"/>
</dbReference>
<dbReference type="InterPro" id="IPR011335">
    <property type="entry name" value="Restrct_endonuc-II-like"/>
</dbReference>
<dbReference type="InterPro" id="IPR011856">
    <property type="entry name" value="tRNA_endonuc-like_dom_sf"/>
</dbReference>
<dbReference type="NCBIfam" id="NF002580">
    <property type="entry name" value="PRK02234.1-1"/>
    <property type="match status" value="1"/>
</dbReference>
<dbReference type="NCBIfam" id="NF002584">
    <property type="entry name" value="PRK02234.1-5"/>
    <property type="match status" value="1"/>
</dbReference>
<dbReference type="NCBIfam" id="TIGR00648">
    <property type="entry name" value="recU"/>
    <property type="match status" value="1"/>
</dbReference>
<dbReference type="Pfam" id="PF03838">
    <property type="entry name" value="RecU"/>
    <property type="match status" value="1"/>
</dbReference>
<dbReference type="PIRSF" id="PIRSF037785">
    <property type="entry name" value="RecU"/>
    <property type="match status" value="1"/>
</dbReference>
<dbReference type="SUPFAM" id="SSF52980">
    <property type="entry name" value="Restriction endonuclease-like"/>
    <property type="match status" value="1"/>
</dbReference>
<feature type="chain" id="PRO_1000193446" description="Holliday junction resolvase RecU">
    <location>
        <begin position="1"/>
        <end position="198"/>
    </location>
</feature>
<feature type="region of interest" description="Disordered" evidence="2">
    <location>
        <begin position="1"/>
        <end position="21"/>
    </location>
</feature>
<feature type="compositionally biased region" description="Polar residues" evidence="2">
    <location>
        <begin position="11"/>
        <end position="21"/>
    </location>
</feature>
<feature type="binding site" evidence="1">
    <location>
        <position position="81"/>
    </location>
    <ligand>
        <name>Mg(2+)</name>
        <dbReference type="ChEBI" id="CHEBI:18420"/>
    </ligand>
</feature>
<feature type="binding site" evidence="1">
    <location>
        <position position="83"/>
    </location>
    <ligand>
        <name>Mg(2+)</name>
        <dbReference type="ChEBI" id="CHEBI:18420"/>
    </ligand>
</feature>
<feature type="binding site" evidence="1">
    <location>
        <position position="96"/>
    </location>
    <ligand>
        <name>Mg(2+)</name>
        <dbReference type="ChEBI" id="CHEBI:18420"/>
    </ligand>
</feature>
<feature type="binding site" evidence="1">
    <location>
        <position position="115"/>
    </location>
    <ligand>
        <name>Mg(2+)</name>
        <dbReference type="ChEBI" id="CHEBI:18420"/>
    </ligand>
</feature>
<feature type="site" description="Transition state stabilizer" evidence="1">
    <location>
        <position position="98"/>
    </location>
</feature>
<gene>
    <name evidence="1" type="primary">recU</name>
    <name type="ordered locus">SPT_0413</name>
</gene>
<accession>C1CPN7</accession>
<keyword id="KW-0963">Cytoplasm</keyword>
<keyword id="KW-0227">DNA damage</keyword>
<keyword id="KW-0233">DNA recombination</keyword>
<keyword id="KW-0234">DNA repair</keyword>
<keyword id="KW-0255">Endonuclease</keyword>
<keyword id="KW-0378">Hydrolase</keyword>
<keyword id="KW-0460">Magnesium</keyword>
<keyword id="KW-0479">Metal-binding</keyword>
<keyword id="KW-0540">Nuclease</keyword>
<evidence type="ECO:0000255" key="1">
    <source>
        <dbReference type="HAMAP-Rule" id="MF_00130"/>
    </source>
</evidence>
<evidence type="ECO:0000256" key="2">
    <source>
        <dbReference type="SAM" id="MobiDB-lite"/>
    </source>
</evidence>
<comment type="function">
    <text evidence="1">Endonuclease that resolves Holliday junction intermediates in genetic recombination. Cleaves mobile four-strand junctions by introducing symmetrical nicks in paired strands. Promotes annealing of linear ssDNA with homologous dsDNA. Required for DNA repair, homologous recombination and chromosome segregation.</text>
</comment>
<comment type="catalytic activity">
    <reaction evidence="1">
        <text>Endonucleolytic cleavage at a junction such as a reciprocal single-stranded crossover between two homologous DNA duplexes (Holliday junction).</text>
        <dbReference type="EC" id="3.1.21.10"/>
    </reaction>
</comment>
<comment type="cofactor">
    <cofactor evidence="1">
        <name>Mg(2+)</name>
        <dbReference type="ChEBI" id="CHEBI:18420"/>
    </cofactor>
    <text evidence="1">Binds 1 Mg(2+) ion per subunit.</text>
</comment>
<comment type="subcellular location">
    <subcellularLocation>
        <location evidence="1">Cytoplasm</location>
    </subcellularLocation>
</comment>
<comment type="similarity">
    <text evidence="1">Belongs to the RecU family.</text>
</comment>
<name>RECU_STRZT</name>
<sequence>MVNYPHKLSSQKRQPSLSQPKNFANRGMSFEKMINATNDYYLSQGLAVIHKKPTPIQIVRVDYPQRSRAKIVEAYFRQASTTDYSGVYNGYYIDFEAKETKQKRAIPMKNFHPHQIQHMEQILAQQGICFVLLHFSSQQETYLLPAYDLIRFYHQDKGQKSMPLGYIREYGYEIKAGAFPQIPYLNVIKEHLLGGKTR</sequence>
<reference key="1">
    <citation type="journal article" date="2010" name="Genome Biol.">
        <title>Structure and dynamics of the pan-genome of Streptococcus pneumoniae and closely related species.</title>
        <authorList>
            <person name="Donati C."/>
            <person name="Hiller N.L."/>
            <person name="Tettelin H."/>
            <person name="Muzzi A."/>
            <person name="Croucher N.J."/>
            <person name="Angiuoli S.V."/>
            <person name="Oggioni M."/>
            <person name="Dunning Hotopp J.C."/>
            <person name="Hu F.Z."/>
            <person name="Riley D.R."/>
            <person name="Covacci A."/>
            <person name="Mitchell T.J."/>
            <person name="Bentley S.D."/>
            <person name="Kilian M."/>
            <person name="Ehrlich G.D."/>
            <person name="Rappuoli R."/>
            <person name="Moxon E.R."/>
            <person name="Masignani V."/>
        </authorList>
    </citation>
    <scope>NUCLEOTIDE SEQUENCE [LARGE SCALE GENOMIC DNA]</scope>
    <source>
        <strain>Taiwan19F-14</strain>
    </source>
</reference>
<proteinExistence type="inferred from homology"/>